<reference key="1">
    <citation type="journal article" date="2006" name="Appl. Environ. Microbiol.">
        <title>Complete genome sequence of the marine, chemolithoautotrophic, ammonia-oxidizing bacterium Nitrosococcus oceani ATCC 19707.</title>
        <authorList>
            <person name="Klotz M.G."/>
            <person name="Arp D.J."/>
            <person name="Chain P.S.G."/>
            <person name="El-Sheikh A.F."/>
            <person name="Hauser L.J."/>
            <person name="Hommes N.G."/>
            <person name="Larimer F.W."/>
            <person name="Malfatti S.A."/>
            <person name="Norton J.M."/>
            <person name="Poret-Peterson A.T."/>
            <person name="Vergez L.M."/>
            <person name="Ward B.B."/>
        </authorList>
    </citation>
    <scope>NUCLEOTIDE SEQUENCE [LARGE SCALE GENOMIC DNA]</scope>
    <source>
        <strain>ATCC 19707 / BCRC 17464 / JCM 30415 / NCIMB 11848 / C-107</strain>
    </source>
</reference>
<sequence>MTVRTRFAPSPTGYLHVGGVRTALFSWLYARKHGGRFILRIEDTDRERSSMESVNAILEGMTWLGLEYDEGPFYQTNRFSRYREIIEQLLASNHAYLCYCTREELASMRAEQMARKEKPRYDGRCRERHSPREGVSPVVRFKSPLEGRVVIRDLVRGMVIFQNNELDDLVLARTDGTPTYNLTVVVDDMDMGMTHVIRGDDHLNNTPRQSNIFYALGKEPPVYAHVPMILGPDRQRLSKRHGAVSVMNYREAGYLPEALLNYLVRLGWSHGDQEIFSVAEMIKLFDIEDVNQSASTFNSEKLLWLNQQYIKNSAPEHIAHHLSWHLGQLGIDPSKGPDLAAVVKAQQERSKTLLEMAHNSAPFYREFEAYEETAARKHLNASVLGPLRDLRERFKEAQSWVAPALHEIILATVESHHLKLGKLAQPLRVAIMGRPISPPIDVTLELMGQATTLARIDRALAWIDHRSNA</sequence>
<organism>
    <name type="scientific">Nitrosococcus oceani (strain ATCC 19707 / BCRC 17464 / JCM 30415 / NCIMB 11848 / C-107)</name>
    <dbReference type="NCBI Taxonomy" id="323261"/>
    <lineage>
        <taxon>Bacteria</taxon>
        <taxon>Pseudomonadati</taxon>
        <taxon>Pseudomonadota</taxon>
        <taxon>Gammaproteobacteria</taxon>
        <taxon>Chromatiales</taxon>
        <taxon>Chromatiaceae</taxon>
        <taxon>Nitrosococcus</taxon>
    </lineage>
</organism>
<name>SYE1_NITOC</name>
<feature type="chain" id="PRO_0000237377" description="Glutamate--tRNA ligase 1">
    <location>
        <begin position="1"/>
        <end position="469"/>
    </location>
</feature>
<feature type="short sequence motif" description="'HIGH' region" evidence="1">
    <location>
        <begin position="9"/>
        <end position="19"/>
    </location>
</feature>
<feature type="short sequence motif" description="'KMSKS' region" evidence="1">
    <location>
        <begin position="236"/>
        <end position="240"/>
    </location>
</feature>
<feature type="binding site" evidence="1">
    <location>
        <position position="98"/>
    </location>
    <ligand>
        <name>Zn(2+)</name>
        <dbReference type="ChEBI" id="CHEBI:29105"/>
    </ligand>
</feature>
<feature type="binding site" evidence="1">
    <location>
        <position position="100"/>
    </location>
    <ligand>
        <name>Zn(2+)</name>
        <dbReference type="ChEBI" id="CHEBI:29105"/>
    </ligand>
</feature>
<feature type="binding site" evidence="1">
    <location>
        <position position="125"/>
    </location>
    <ligand>
        <name>Zn(2+)</name>
        <dbReference type="ChEBI" id="CHEBI:29105"/>
    </ligand>
</feature>
<feature type="binding site" evidence="1">
    <location>
        <position position="127"/>
    </location>
    <ligand>
        <name>Zn(2+)</name>
        <dbReference type="ChEBI" id="CHEBI:29105"/>
    </ligand>
</feature>
<feature type="binding site" evidence="1">
    <location>
        <position position="239"/>
    </location>
    <ligand>
        <name>ATP</name>
        <dbReference type="ChEBI" id="CHEBI:30616"/>
    </ligand>
</feature>
<gene>
    <name evidence="1" type="primary">gltX1</name>
    <name type="ordered locus">Noc_0264</name>
</gene>
<dbReference type="EC" id="6.1.1.17" evidence="1"/>
<dbReference type="EMBL" id="CP000127">
    <property type="protein sequence ID" value="ABA56794.1"/>
    <property type="molecule type" value="Genomic_DNA"/>
</dbReference>
<dbReference type="SMR" id="Q3JEF2"/>
<dbReference type="FunCoup" id="Q3JEF2">
    <property type="interactions" value="591"/>
</dbReference>
<dbReference type="STRING" id="323261.Noc_0264"/>
<dbReference type="KEGG" id="noc:Noc_0264"/>
<dbReference type="eggNOG" id="COG0008">
    <property type="taxonomic scope" value="Bacteria"/>
</dbReference>
<dbReference type="HOGENOM" id="CLU_015768_6_3_6"/>
<dbReference type="InParanoid" id="Q3JEF2"/>
<dbReference type="Proteomes" id="UP000006838">
    <property type="component" value="Chromosome"/>
</dbReference>
<dbReference type="GO" id="GO:0005829">
    <property type="term" value="C:cytosol"/>
    <property type="evidence" value="ECO:0007669"/>
    <property type="project" value="TreeGrafter"/>
</dbReference>
<dbReference type="GO" id="GO:0005524">
    <property type="term" value="F:ATP binding"/>
    <property type="evidence" value="ECO:0007669"/>
    <property type="project" value="UniProtKB-UniRule"/>
</dbReference>
<dbReference type="GO" id="GO:0004818">
    <property type="term" value="F:glutamate-tRNA ligase activity"/>
    <property type="evidence" value="ECO:0007669"/>
    <property type="project" value="UniProtKB-UniRule"/>
</dbReference>
<dbReference type="GO" id="GO:0000049">
    <property type="term" value="F:tRNA binding"/>
    <property type="evidence" value="ECO:0007669"/>
    <property type="project" value="InterPro"/>
</dbReference>
<dbReference type="GO" id="GO:0008270">
    <property type="term" value="F:zinc ion binding"/>
    <property type="evidence" value="ECO:0007669"/>
    <property type="project" value="UniProtKB-UniRule"/>
</dbReference>
<dbReference type="GO" id="GO:0006424">
    <property type="term" value="P:glutamyl-tRNA aminoacylation"/>
    <property type="evidence" value="ECO:0007669"/>
    <property type="project" value="UniProtKB-UniRule"/>
</dbReference>
<dbReference type="CDD" id="cd00808">
    <property type="entry name" value="GluRS_core"/>
    <property type="match status" value="1"/>
</dbReference>
<dbReference type="FunFam" id="3.40.50.620:FF:000007">
    <property type="entry name" value="Glutamate--tRNA ligase"/>
    <property type="match status" value="1"/>
</dbReference>
<dbReference type="Gene3D" id="1.10.10.350">
    <property type="match status" value="1"/>
</dbReference>
<dbReference type="Gene3D" id="3.40.50.620">
    <property type="entry name" value="HUPs"/>
    <property type="match status" value="1"/>
</dbReference>
<dbReference type="HAMAP" id="MF_00022">
    <property type="entry name" value="Glu_tRNA_synth_type1"/>
    <property type="match status" value="1"/>
</dbReference>
<dbReference type="InterPro" id="IPR045462">
    <property type="entry name" value="aa-tRNA-synth_I_cd-bd"/>
</dbReference>
<dbReference type="InterPro" id="IPR020751">
    <property type="entry name" value="aa-tRNA-synth_I_codon-bd_sub2"/>
</dbReference>
<dbReference type="InterPro" id="IPR001412">
    <property type="entry name" value="aa-tRNA-synth_I_CS"/>
</dbReference>
<dbReference type="InterPro" id="IPR008925">
    <property type="entry name" value="aa_tRNA-synth_I_cd-bd_sf"/>
</dbReference>
<dbReference type="InterPro" id="IPR004527">
    <property type="entry name" value="Glu-tRNA-ligase_bac/mito"/>
</dbReference>
<dbReference type="InterPro" id="IPR000924">
    <property type="entry name" value="Glu/Gln-tRNA-synth"/>
</dbReference>
<dbReference type="InterPro" id="IPR020058">
    <property type="entry name" value="Glu/Gln-tRNA-synth_Ib_cat-dom"/>
</dbReference>
<dbReference type="InterPro" id="IPR049940">
    <property type="entry name" value="GluQ/Sye"/>
</dbReference>
<dbReference type="InterPro" id="IPR033910">
    <property type="entry name" value="GluRS_core"/>
</dbReference>
<dbReference type="InterPro" id="IPR014729">
    <property type="entry name" value="Rossmann-like_a/b/a_fold"/>
</dbReference>
<dbReference type="NCBIfam" id="TIGR00464">
    <property type="entry name" value="gltX_bact"/>
    <property type="match status" value="1"/>
</dbReference>
<dbReference type="PANTHER" id="PTHR43311">
    <property type="entry name" value="GLUTAMATE--TRNA LIGASE"/>
    <property type="match status" value="1"/>
</dbReference>
<dbReference type="PANTHER" id="PTHR43311:SF2">
    <property type="entry name" value="GLUTAMATE--TRNA LIGASE, MITOCHONDRIAL-RELATED"/>
    <property type="match status" value="1"/>
</dbReference>
<dbReference type="Pfam" id="PF19269">
    <property type="entry name" value="Anticodon_2"/>
    <property type="match status" value="1"/>
</dbReference>
<dbReference type="Pfam" id="PF00749">
    <property type="entry name" value="tRNA-synt_1c"/>
    <property type="match status" value="1"/>
</dbReference>
<dbReference type="PRINTS" id="PR00987">
    <property type="entry name" value="TRNASYNTHGLU"/>
</dbReference>
<dbReference type="SUPFAM" id="SSF48163">
    <property type="entry name" value="An anticodon-binding domain of class I aminoacyl-tRNA synthetases"/>
    <property type="match status" value="1"/>
</dbReference>
<dbReference type="SUPFAM" id="SSF52374">
    <property type="entry name" value="Nucleotidylyl transferase"/>
    <property type="match status" value="1"/>
</dbReference>
<dbReference type="PROSITE" id="PS00178">
    <property type="entry name" value="AA_TRNA_LIGASE_I"/>
    <property type="match status" value="1"/>
</dbReference>
<comment type="function">
    <text evidence="1">Catalyzes the attachment of glutamate to tRNA(Glu) in a two-step reaction: glutamate is first activated by ATP to form Glu-AMP and then transferred to the acceptor end of tRNA(Glu).</text>
</comment>
<comment type="catalytic activity">
    <reaction evidence="1">
        <text>tRNA(Glu) + L-glutamate + ATP = L-glutamyl-tRNA(Glu) + AMP + diphosphate</text>
        <dbReference type="Rhea" id="RHEA:23540"/>
        <dbReference type="Rhea" id="RHEA-COMP:9663"/>
        <dbReference type="Rhea" id="RHEA-COMP:9680"/>
        <dbReference type="ChEBI" id="CHEBI:29985"/>
        <dbReference type="ChEBI" id="CHEBI:30616"/>
        <dbReference type="ChEBI" id="CHEBI:33019"/>
        <dbReference type="ChEBI" id="CHEBI:78442"/>
        <dbReference type="ChEBI" id="CHEBI:78520"/>
        <dbReference type="ChEBI" id="CHEBI:456215"/>
        <dbReference type="EC" id="6.1.1.17"/>
    </reaction>
</comment>
<comment type="cofactor">
    <cofactor evidence="1">
        <name>Zn(2+)</name>
        <dbReference type="ChEBI" id="CHEBI:29105"/>
    </cofactor>
    <text evidence="1">Binds 1 zinc ion per subunit.</text>
</comment>
<comment type="subunit">
    <text evidence="1">Monomer.</text>
</comment>
<comment type="subcellular location">
    <subcellularLocation>
        <location evidence="1">Cytoplasm</location>
    </subcellularLocation>
</comment>
<comment type="similarity">
    <text evidence="1">Belongs to the class-I aminoacyl-tRNA synthetase family. Glutamate--tRNA ligase type 1 subfamily.</text>
</comment>
<protein>
    <recommendedName>
        <fullName evidence="1">Glutamate--tRNA ligase 1</fullName>
        <ecNumber evidence="1">6.1.1.17</ecNumber>
    </recommendedName>
    <alternativeName>
        <fullName evidence="1">Glutamyl-tRNA synthetase 1</fullName>
        <shortName evidence="1">GluRS 1</shortName>
    </alternativeName>
</protein>
<keyword id="KW-0030">Aminoacyl-tRNA synthetase</keyword>
<keyword id="KW-0067">ATP-binding</keyword>
<keyword id="KW-0963">Cytoplasm</keyword>
<keyword id="KW-0436">Ligase</keyword>
<keyword id="KW-0479">Metal-binding</keyword>
<keyword id="KW-0547">Nucleotide-binding</keyword>
<keyword id="KW-0648">Protein biosynthesis</keyword>
<keyword id="KW-1185">Reference proteome</keyword>
<keyword id="KW-0862">Zinc</keyword>
<proteinExistence type="inferred from homology"/>
<evidence type="ECO:0000255" key="1">
    <source>
        <dbReference type="HAMAP-Rule" id="MF_00022"/>
    </source>
</evidence>
<accession>Q3JEF2</accession>